<dbReference type="EC" id="6.2.1.13" evidence="1"/>
<dbReference type="EMBL" id="L77117">
    <property type="protein sequence ID" value="AAB98580.1"/>
    <property type="molecule type" value="Genomic_DNA"/>
</dbReference>
<dbReference type="PIR" id="F64373">
    <property type="entry name" value="F64373"/>
</dbReference>
<dbReference type="RefSeq" id="WP_010870094.1">
    <property type="nucleotide sequence ID" value="NC_000909.1"/>
</dbReference>
<dbReference type="SMR" id="Q58010"/>
<dbReference type="FunCoup" id="Q58010">
    <property type="interactions" value="30"/>
</dbReference>
<dbReference type="STRING" id="243232.MJ_0590"/>
<dbReference type="PaxDb" id="243232-MJ_0590"/>
<dbReference type="EnsemblBacteria" id="AAB98580">
    <property type="protein sequence ID" value="AAB98580"/>
    <property type="gene ID" value="MJ_0590"/>
</dbReference>
<dbReference type="GeneID" id="1451455"/>
<dbReference type="KEGG" id="mja:MJ_0590"/>
<dbReference type="eggNOG" id="arCOG01340">
    <property type="taxonomic scope" value="Archaea"/>
</dbReference>
<dbReference type="HOGENOM" id="CLU_007415_3_1_2"/>
<dbReference type="InParanoid" id="Q58010"/>
<dbReference type="OrthoDB" id="18103at2157"/>
<dbReference type="PhylomeDB" id="Q58010"/>
<dbReference type="BRENDA" id="6.2.1.B11">
    <property type="organism ID" value="3260"/>
</dbReference>
<dbReference type="SABIO-RK" id="Q58010"/>
<dbReference type="Proteomes" id="UP000000805">
    <property type="component" value="Chromosome"/>
</dbReference>
<dbReference type="GO" id="GO:0043758">
    <property type="term" value="F:acetate-CoA ligase (ADP-forming) activity"/>
    <property type="evidence" value="ECO:0007669"/>
    <property type="project" value="UniProtKB-EC"/>
</dbReference>
<dbReference type="GO" id="GO:0005524">
    <property type="term" value="F:ATP binding"/>
    <property type="evidence" value="ECO:0007669"/>
    <property type="project" value="UniProtKB-KW"/>
</dbReference>
<dbReference type="Gene3D" id="3.30.1490.20">
    <property type="entry name" value="ATP-grasp fold, A domain"/>
    <property type="match status" value="1"/>
</dbReference>
<dbReference type="Gene3D" id="3.30.470.20">
    <property type="entry name" value="ATP-grasp fold, B domain"/>
    <property type="match status" value="1"/>
</dbReference>
<dbReference type="Gene3D" id="3.40.50.720">
    <property type="entry name" value="NAD(P)-binding Rossmann-like Domain"/>
    <property type="match status" value="1"/>
</dbReference>
<dbReference type="Gene3D" id="3.40.50.261">
    <property type="entry name" value="Succinyl-CoA synthetase domains"/>
    <property type="match status" value="2"/>
</dbReference>
<dbReference type="InterPro" id="IPR014089">
    <property type="entry name" value="AcCoA-synth-alpha"/>
</dbReference>
<dbReference type="InterPro" id="IPR051538">
    <property type="entry name" value="Acyl-CoA_Synth/Transferase"/>
</dbReference>
<dbReference type="InterPro" id="IPR013815">
    <property type="entry name" value="ATP_grasp_subdomain_1"/>
</dbReference>
<dbReference type="InterPro" id="IPR003781">
    <property type="entry name" value="CoA-bd"/>
</dbReference>
<dbReference type="InterPro" id="IPR043938">
    <property type="entry name" value="Ligase_CoA_dom"/>
</dbReference>
<dbReference type="InterPro" id="IPR036291">
    <property type="entry name" value="NAD(P)-bd_dom_sf"/>
</dbReference>
<dbReference type="InterPro" id="IPR032875">
    <property type="entry name" value="Succ_CoA_lig_flav_dom"/>
</dbReference>
<dbReference type="InterPro" id="IPR016102">
    <property type="entry name" value="Succinyl-CoA_synth-like"/>
</dbReference>
<dbReference type="NCBIfam" id="TIGR02717">
    <property type="entry name" value="AcCoA-syn-alpha"/>
    <property type="match status" value="1"/>
</dbReference>
<dbReference type="PANTHER" id="PTHR43334">
    <property type="entry name" value="ACETATE--COA LIGASE [ADP-FORMING]"/>
    <property type="match status" value="1"/>
</dbReference>
<dbReference type="PANTHER" id="PTHR43334:SF2">
    <property type="entry name" value="ACETATE--COA LIGASE [ADP-FORMING]"/>
    <property type="match status" value="1"/>
</dbReference>
<dbReference type="Pfam" id="PF13549">
    <property type="entry name" value="ATP-grasp_5"/>
    <property type="match status" value="1"/>
</dbReference>
<dbReference type="Pfam" id="PF13380">
    <property type="entry name" value="CoA_binding_2"/>
    <property type="match status" value="1"/>
</dbReference>
<dbReference type="Pfam" id="PF19045">
    <property type="entry name" value="Ligase_CoA_2"/>
    <property type="match status" value="1"/>
</dbReference>
<dbReference type="Pfam" id="PF13607">
    <property type="entry name" value="Succ_CoA_lig"/>
    <property type="match status" value="1"/>
</dbReference>
<dbReference type="SMART" id="SM00881">
    <property type="entry name" value="CoA_binding"/>
    <property type="match status" value="1"/>
</dbReference>
<dbReference type="SUPFAM" id="SSF56059">
    <property type="entry name" value="Glutathione synthetase ATP-binding domain-like"/>
    <property type="match status" value="1"/>
</dbReference>
<dbReference type="SUPFAM" id="SSF51735">
    <property type="entry name" value="NAD(P)-binding Rossmann-fold domains"/>
    <property type="match status" value="1"/>
</dbReference>
<dbReference type="SUPFAM" id="SSF52210">
    <property type="entry name" value="Succinyl-CoA synthetase domains"/>
    <property type="match status" value="2"/>
</dbReference>
<reference key="1">
    <citation type="journal article" date="1996" name="Science">
        <title>Complete genome sequence of the methanogenic archaeon, Methanococcus jannaschii.</title>
        <authorList>
            <person name="Bult C.J."/>
            <person name="White O."/>
            <person name="Olsen G.J."/>
            <person name="Zhou L."/>
            <person name="Fleischmann R.D."/>
            <person name="Sutton G.G."/>
            <person name="Blake J.A."/>
            <person name="FitzGerald L.M."/>
            <person name="Clayton R.A."/>
            <person name="Gocayne J.D."/>
            <person name="Kerlavage A.R."/>
            <person name="Dougherty B.A."/>
            <person name="Tomb J.-F."/>
            <person name="Adams M.D."/>
            <person name="Reich C.I."/>
            <person name="Overbeek R."/>
            <person name="Kirkness E.F."/>
            <person name="Weinstock K.G."/>
            <person name="Merrick J.M."/>
            <person name="Glodek A."/>
            <person name="Scott J.L."/>
            <person name="Geoghagen N.S.M."/>
            <person name="Weidman J.F."/>
            <person name="Fuhrmann J.L."/>
            <person name="Nguyen D."/>
            <person name="Utterback T.R."/>
            <person name="Kelley J.M."/>
            <person name="Peterson J.D."/>
            <person name="Sadow P.W."/>
            <person name="Hanna M.C."/>
            <person name="Cotton M.D."/>
            <person name="Roberts K.M."/>
            <person name="Hurst M.A."/>
            <person name="Kaine B.P."/>
            <person name="Borodovsky M."/>
            <person name="Klenk H.-P."/>
            <person name="Fraser C.M."/>
            <person name="Smith H.O."/>
            <person name="Woese C.R."/>
            <person name="Venter J.C."/>
        </authorList>
    </citation>
    <scope>NUCLEOTIDE SEQUENCE [LARGE SCALE GENOMIC DNA]</scope>
    <source>
        <strain>ATCC 43067 / DSM 2661 / JAL-1 / JCM 10045 / NBRC 100440</strain>
    </source>
</reference>
<reference key="2">
    <citation type="journal article" date="2002" name="J. Bacteriol.">
        <title>Novel type of ADP-forming acetyl coenzyme A synthetase in hyperthermophilic archaea: heterologous expression and characterization of isoenzymes from the sulfate reducer Archaeoglobus fulgidus and the methanogen Methanococcus jannaschii.</title>
        <authorList>
            <person name="Musfeldt M."/>
            <person name="Schoenheit P."/>
        </authorList>
    </citation>
    <scope>FUNCTION</scope>
    <scope>CATALYTIC ACTIVITY</scope>
    <scope>BIOPHYSICOCHEMICAL PROPERTIES</scope>
    <scope>SUBUNIT</scope>
</reference>
<feature type="chain" id="PRO_0000106948" description="Acetate--CoA ligase [ADP-forming]">
    <location>
        <begin position="1"/>
        <end position="704"/>
    </location>
</feature>
<name>ACD_METJA</name>
<evidence type="ECO:0000269" key="1">
    <source>
    </source>
</evidence>
<evidence type="ECO:0000305" key="2"/>
<evidence type="ECO:0000312" key="3">
    <source>
        <dbReference type="EMBL" id="AAB98580.1"/>
    </source>
</evidence>
<proteinExistence type="evidence at protein level"/>
<comment type="function">
    <text evidence="1">Catalyzes the formation of acetate and ATP from acetyl-CoA by using ADP and phosphate. Can also use butyryl-CoA, but not phenylacetyl-CoA. Cannot catalyze the reverse reaction.</text>
</comment>
<comment type="catalytic activity">
    <reaction evidence="1">
        <text>acetate + ATP + CoA = acetyl-CoA + ADP + phosphate</text>
        <dbReference type="Rhea" id="RHEA:15081"/>
        <dbReference type="ChEBI" id="CHEBI:30089"/>
        <dbReference type="ChEBI" id="CHEBI:30616"/>
        <dbReference type="ChEBI" id="CHEBI:43474"/>
        <dbReference type="ChEBI" id="CHEBI:57287"/>
        <dbReference type="ChEBI" id="CHEBI:57288"/>
        <dbReference type="ChEBI" id="CHEBI:456216"/>
        <dbReference type="EC" id="6.2.1.13"/>
    </reaction>
</comment>
<comment type="biophysicochemical properties">
    <kinetics>
        <KM evidence="1">37 uM for acetyl-CoA</KM>
        <KM evidence="1">15 uM for ADP</KM>
        <KM evidence="1">470 uM for phosphate</KM>
    </kinetics>
</comment>
<comment type="subunit">
    <text evidence="1">Homodimer.</text>
</comment>
<comment type="similarity">
    <text evidence="2">In the N-terminal section; belongs to the acetate CoA ligase alpha subunit family.</text>
</comment>
<comment type="similarity">
    <text evidence="2">In the C-terminal section; belongs to the acetate CoA ligase beta subunit family.</text>
</comment>
<sequence>MWGRDYELKYISYPKSVAIIGASKTEGKVGYAIMKNLKDFNGKIYPINPKYDEIFGIKCYKSVLDVEDDIDLAVIVVPNIVVPKVLEECGKKGVKGAVIITAGFSEVGNYELENKIKEIAKRYNIRIIGPNCLGIMNTHINLNATFAKVFPPKGGVSIISQSGAVLNAILDIAPLLNIGFSKVVSIGNKADIQESDLLEYFLDDEDTKIVVLYIEGLKDKRFLKVAKKLSKKKPIIALKSGRTEVGKKAAKSHTGSLAGEDVIYEAAFKEAGIIRAYTFEELVDLIHLFSTQPTISSNEIGIITNAGGFGVLAADSCVDYNMKLSNFEKSTIEKLKNILPPTANISNPLDIIGDATPERYKKVIEVLAEDSNVKGLLVILTPQEMTKPLEVAKSIIEVKNSHKEFKNKPLITSFVGGVSVKGAKSYLRKNGIPAYITPENGVKALSHLYKYSLMKVKEDYDEYLENIKEEFIKITEENKEIIKELLSNPNEYTAKKLLSIYGLPVPKGYLAKNEDEALEYCKKLGKCVMKIVSPQIIHKTEAGGVIINPKNPKEAFKKLIENAKEYAKRMGIDNLIIEGVLVEEFIEKDMMEIIIGAKRDDIFGSVVMVGLGGVFVEVLKDVSFGISPITRDFAHEMLRELKSYKVLEGVRGRPKRDINFIVDTLIKIGVFMDIHKEIKELDLNPVFVFNEKEGGCIGDARIIK</sequence>
<accession>Q58010</accession>
<keyword id="KW-0067">ATP-binding</keyword>
<keyword id="KW-0436">Ligase</keyword>
<keyword id="KW-0547">Nucleotide-binding</keyword>
<keyword id="KW-1185">Reference proteome</keyword>
<organism>
    <name type="scientific">Methanocaldococcus jannaschii (strain ATCC 43067 / DSM 2661 / JAL-1 / JCM 10045 / NBRC 100440)</name>
    <name type="common">Methanococcus jannaschii</name>
    <dbReference type="NCBI Taxonomy" id="243232"/>
    <lineage>
        <taxon>Archaea</taxon>
        <taxon>Methanobacteriati</taxon>
        <taxon>Methanobacteriota</taxon>
        <taxon>Methanomada group</taxon>
        <taxon>Methanococci</taxon>
        <taxon>Methanococcales</taxon>
        <taxon>Methanocaldococcaceae</taxon>
        <taxon>Methanocaldococcus</taxon>
    </lineage>
</organism>
<gene>
    <name evidence="3" type="ordered locus">MJ0590</name>
</gene>
<protein>
    <recommendedName>
        <fullName evidence="2">Acetate--CoA ligase [ADP-forming]</fullName>
        <ecNumber evidence="1">6.2.1.13</ecNumber>
    </recommendedName>
    <alternativeName>
        <fullName evidence="2">ADP-forming acetyl coenzyme A synthetase</fullName>
        <shortName evidence="2">ACS</shortName>
    </alternativeName>
</protein>